<proteinExistence type="inferred from homology"/>
<accession>Q8TL61</accession>
<reference key="1">
    <citation type="journal article" date="2002" name="Genome Res.">
        <title>The genome of Methanosarcina acetivorans reveals extensive metabolic and physiological diversity.</title>
        <authorList>
            <person name="Galagan J.E."/>
            <person name="Nusbaum C."/>
            <person name="Roy A."/>
            <person name="Endrizzi M.G."/>
            <person name="Macdonald P."/>
            <person name="FitzHugh W."/>
            <person name="Calvo S."/>
            <person name="Engels R."/>
            <person name="Smirnov S."/>
            <person name="Atnoor D."/>
            <person name="Brown A."/>
            <person name="Allen N."/>
            <person name="Naylor J."/>
            <person name="Stange-Thomann N."/>
            <person name="DeArellano K."/>
            <person name="Johnson R."/>
            <person name="Linton L."/>
            <person name="McEwan P."/>
            <person name="McKernan K."/>
            <person name="Talamas J."/>
            <person name="Tirrell A."/>
            <person name="Ye W."/>
            <person name="Zimmer A."/>
            <person name="Barber R.D."/>
            <person name="Cann I."/>
            <person name="Graham D.E."/>
            <person name="Grahame D.A."/>
            <person name="Guss A.M."/>
            <person name="Hedderich R."/>
            <person name="Ingram-Smith C."/>
            <person name="Kuettner H.C."/>
            <person name="Krzycki J.A."/>
            <person name="Leigh J.A."/>
            <person name="Li W."/>
            <person name="Liu J."/>
            <person name="Mukhopadhyay B."/>
            <person name="Reeve J.N."/>
            <person name="Smith K."/>
            <person name="Springer T.A."/>
            <person name="Umayam L.A."/>
            <person name="White O."/>
            <person name="White R.H."/>
            <person name="de Macario E.C."/>
            <person name="Ferry J.G."/>
            <person name="Jarrell K.F."/>
            <person name="Jing H."/>
            <person name="Macario A.J.L."/>
            <person name="Paulsen I.T."/>
            <person name="Pritchett M."/>
            <person name="Sowers K.R."/>
            <person name="Swanson R.V."/>
            <person name="Zinder S.H."/>
            <person name="Lander E."/>
            <person name="Metcalf W.W."/>
            <person name="Birren B."/>
        </authorList>
    </citation>
    <scope>NUCLEOTIDE SEQUENCE [LARGE SCALE GENOMIC DNA]</scope>
    <source>
        <strain>ATCC 35395 / DSM 2834 / JCM 12185 / C2A</strain>
    </source>
</reference>
<sequence>MFSKSDFRGIINSMGLVFGDIGTSPIYTLTVIFLLTRPTEVHVIGVLSLIIWTLITLVTVEYAWLAMSLGKKGEGGTIVLKELLVPLIKSGRNAAFITLLAYIGVSFLVGDGVITPAISILSAVEGLRIIPDFQDIGQGAIMFIAGIIAVALFSVQSKGTEEITWVFGPVMVLWFASLAFSGIASIFYTPGVLRAINPYYAISFLLHNGFTGFFVLSEVILCATGGEALYADMGHLGREPILKAWRLVFSALVLNYLGQGAFIIRNPESKNILFEMINQQAEVIYIPFLILSITATIIASQAMISGMFSIVYQGITTRIIPMLKIDYTSGKLRSQIYIGAVNWLLLISVLFMIFEFRDSHRLAAAYGLAVTGTMSITGLMMTLIFYLKGRMFRSFVSLFVTVIDVVFLLSNTYKIPHGGYWSIVIAAIAFSLIIIYTSGQKKLYELMNPMKIGDFLEKYKQVYASENKISGTALFFARDINYVPRYISNVMFENNIIYEDNIFISIIKCESPFGVKSSFAKDLAKGLRVFEINVGYMEVIDVVQILKDKGIQEKTIFYGIEDILTSNLIWKVFSVIKKLSPSFVQFYKLPSDKLHGVLTRFEM</sequence>
<feature type="chain" id="PRO_0000209076" description="Probable potassium transport system protein Kup">
    <location>
        <begin position="1"/>
        <end position="603"/>
    </location>
</feature>
<feature type="transmembrane region" description="Helical" evidence="1">
    <location>
        <begin position="15"/>
        <end position="35"/>
    </location>
</feature>
<feature type="transmembrane region" description="Helical" evidence="1">
    <location>
        <begin position="43"/>
        <end position="63"/>
    </location>
</feature>
<feature type="transmembrane region" description="Helical" evidence="1">
    <location>
        <begin position="94"/>
        <end position="114"/>
    </location>
</feature>
<feature type="transmembrane region" description="Helical" evidence="1">
    <location>
        <begin position="136"/>
        <end position="156"/>
    </location>
</feature>
<feature type="transmembrane region" description="Helical" evidence="1">
    <location>
        <begin position="163"/>
        <end position="183"/>
    </location>
</feature>
<feature type="transmembrane region" description="Helical" evidence="1">
    <location>
        <begin position="201"/>
        <end position="221"/>
    </location>
</feature>
<feature type="transmembrane region" description="Helical" evidence="1">
    <location>
        <begin position="244"/>
        <end position="264"/>
    </location>
</feature>
<feature type="transmembrane region" description="Helical" evidence="1">
    <location>
        <begin position="284"/>
        <end position="304"/>
    </location>
</feature>
<feature type="transmembrane region" description="Helical" evidence="1">
    <location>
        <begin position="336"/>
        <end position="356"/>
    </location>
</feature>
<feature type="transmembrane region" description="Helical" evidence="1">
    <location>
        <begin position="367"/>
        <end position="387"/>
    </location>
</feature>
<feature type="transmembrane region" description="Helical" evidence="1">
    <location>
        <begin position="391"/>
        <end position="411"/>
    </location>
</feature>
<feature type="transmembrane region" description="Helical" evidence="1">
    <location>
        <begin position="415"/>
        <end position="435"/>
    </location>
</feature>
<organism>
    <name type="scientific">Methanosarcina acetivorans (strain ATCC 35395 / DSM 2834 / JCM 12185 / C2A)</name>
    <dbReference type="NCBI Taxonomy" id="188937"/>
    <lineage>
        <taxon>Archaea</taxon>
        <taxon>Methanobacteriati</taxon>
        <taxon>Methanobacteriota</taxon>
        <taxon>Stenosarchaea group</taxon>
        <taxon>Methanomicrobia</taxon>
        <taxon>Methanosarcinales</taxon>
        <taxon>Methanosarcinaceae</taxon>
        <taxon>Methanosarcina</taxon>
    </lineage>
</organism>
<dbReference type="EMBL" id="AE010299">
    <property type="protein sequence ID" value="AAM06552.1"/>
    <property type="molecule type" value="Genomic_DNA"/>
</dbReference>
<dbReference type="RefSeq" id="WP_011023116.1">
    <property type="nucleotide sequence ID" value="NC_003552.1"/>
</dbReference>
<dbReference type="STRING" id="188937.MA_3179"/>
<dbReference type="TCDB" id="2.A.72.1.2">
    <property type="family name" value="the k(+) uptake permease (kup) family"/>
</dbReference>
<dbReference type="EnsemblBacteria" id="AAM06552">
    <property type="protein sequence ID" value="AAM06552"/>
    <property type="gene ID" value="MA_3179"/>
</dbReference>
<dbReference type="GeneID" id="1475073"/>
<dbReference type="KEGG" id="mac:MA_3179"/>
<dbReference type="HOGENOM" id="CLU_008142_4_2_2"/>
<dbReference type="InParanoid" id="Q8TL61"/>
<dbReference type="OrthoDB" id="115647at2157"/>
<dbReference type="PhylomeDB" id="Q8TL61"/>
<dbReference type="Proteomes" id="UP000002487">
    <property type="component" value="Chromosome"/>
</dbReference>
<dbReference type="GO" id="GO:0005886">
    <property type="term" value="C:plasma membrane"/>
    <property type="evidence" value="ECO:0007669"/>
    <property type="project" value="UniProtKB-SubCell"/>
</dbReference>
<dbReference type="GO" id="GO:0015079">
    <property type="term" value="F:potassium ion transmembrane transporter activity"/>
    <property type="evidence" value="ECO:0007669"/>
    <property type="project" value="UniProtKB-UniRule"/>
</dbReference>
<dbReference type="GO" id="GO:0015293">
    <property type="term" value="F:symporter activity"/>
    <property type="evidence" value="ECO:0007669"/>
    <property type="project" value="UniProtKB-UniRule"/>
</dbReference>
<dbReference type="HAMAP" id="MF_01522">
    <property type="entry name" value="Kup"/>
    <property type="match status" value="1"/>
</dbReference>
<dbReference type="InterPro" id="IPR003855">
    <property type="entry name" value="K+_transporter"/>
</dbReference>
<dbReference type="InterPro" id="IPR053952">
    <property type="entry name" value="K_trans_C"/>
</dbReference>
<dbReference type="InterPro" id="IPR053951">
    <property type="entry name" value="K_trans_N"/>
</dbReference>
<dbReference type="InterPro" id="IPR023051">
    <property type="entry name" value="Kup"/>
</dbReference>
<dbReference type="PANTHER" id="PTHR30540:SF83">
    <property type="entry name" value="K+ POTASSIUM TRANSPORTER"/>
    <property type="match status" value="1"/>
</dbReference>
<dbReference type="PANTHER" id="PTHR30540">
    <property type="entry name" value="OSMOTIC STRESS POTASSIUM TRANSPORTER"/>
    <property type="match status" value="1"/>
</dbReference>
<dbReference type="Pfam" id="PF02705">
    <property type="entry name" value="K_trans"/>
    <property type="match status" value="1"/>
</dbReference>
<dbReference type="Pfam" id="PF22776">
    <property type="entry name" value="K_trans_C"/>
    <property type="match status" value="1"/>
</dbReference>
<name>KUP_METAC</name>
<keyword id="KW-1003">Cell membrane</keyword>
<keyword id="KW-0406">Ion transport</keyword>
<keyword id="KW-0472">Membrane</keyword>
<keyword id="KW-0630">Potassium</keyword>
<keyword id="KW-0633">Potassium transport</keyword>
<keyword id="KW-1185">Reference proteome</keyword>
<keyword id="KW-0769">Symport</keyword>
<keyword id="KW-0812">Transmembrane</keyword>
<keyword id="KW-1133">Transmembrane helix</keyword>
<keyword id="KW-0813">Transport</keyword>
<protein>
    <recommendedName>
        <fullName evidence="1">Probable potassium transport system protein Kup</fullName>
    </recommendedName>
</protein>
<gene>
    <name evidence="1" type="primary">kup</name>
    <name type="ordered locus">MA_3179</name>
</gene>
<evidence type="ECO:0000255" key="1">
    <source>
        <dbReference type="HAMAP-Rule" id="MF_01522"/>
    </source>
</evidence>
<comment type="function">
    <text evidence="1">Transport of potassium into the cell. Likely operates as a K(+):H(+) symporter.</text>
</comment>
<comment type="catalytic activity">
    <reaction evidence="1">
        <text>K(+)(in) + H(+)(in) = K(+)(out) + H(+)(out)</text>
        <dbReference type="Rhea" id="RHEA:28490"/>
        <dbReference type="ChEBI" id="CHEBI:15378"/>
        <dbReference type="ChEBI" id="CHEBI:29103"/>
    </reaction>
    <physiologicalReaction direction="right-to-left" evidence="1">
        <dbReference type="Rhea" id="RHEA:28492"/>
    </physiologicalReaction>
</comment>
<comment type="subcellular location">
    <subcellularLocation>
        <location evidence="1">Cell membrane</location>
        <topology evidence="1">Multi-pass membrane protein</topology>
    </subcellularLocation>
</comment>
<comment type="similarity">
    <text evidence="1">Belongs to the HAK/KUP transporter (TC 2.A.72) family.</text>
</comment>